<reference key="1">
    <citation type="journal article" date="2003" name="Proc. Natl. Acad. Sci. U.S.A.">
        <title>The complete genome sequence of Mycobacterium bovis.</title>
        <authorList>
            <person name="Garnier T."/>
            <person name="Eiglmeier K."/>
            <person name="Camus J.-C."/>
            <person name="Medina N."/>
            <person name="Mansoor H."/>
            <person name="Pryor M."/>
            <person name="Duthoy S."/>
            <person name="Grondin S."/>
            <person name="Lacroix C."/>
            <person name="Monsempe C."/>
            <person name="Simon S."/>
            <person name="Harris B."/>
            <person name="Atkin R."/>
            <person name="Doggett J."/>
            <person name="Mayes R."/>
            <person name="Keating L."/>
            <person name="Wheeler P.R."/>
            <person name="Parkhill J."/>
            <person name="Barrell B.G."/>
            <person name="Cole S.T."/>
            <person name="Gordon S.V."/>
            <person name="Hewinson R.G."/>
        </authorList>
    </citation>
    <scope>NUCLEOTIDE SEQUENCE [LARGE SCALE GENOMIC DNA]</scope>
    <source>
        <strain>ATCC BAA-935 / AF2122/97</strain>
    </source>
</reference>
<reference key="2">
    <citation type="journal article" date="2017" name="Genome Announc.">
        <title>Updated reference genome sequence and annotation of Mycobacterium bovis AF2122/97.</title>
        <authorList>
            <person name="Malone K.M."/>
            <person name="Farrell D."/>
            <person name="Stuber T.P."/>
            <person name="Schubert O.T."/>
            <person name="Aebersold R."/>
            <person name="Robbe-Austerman S."/>
            <person name="Gordon S.V."/>
        </authorList>
    </citation>
    <scope>NUCLEOTIDE SEQUENCE [LARGE SCALE GENOMIC DNA]</scope>
    <scope>GENOME REANNOTATION</scope>
    <source>
        <strain>ATCC BAA-935 / AF2122/97</strain>
    </source>
</reference>
<proteinExistence type="inferred from homology"/>
<feature type="chain" id="PRO_0000190351" description="Recombination protein RecR">
    <location>
        <begin position="1"/>
        <end position="203"/>
    </location>
</feature>
<feature type="domain" description="Toprim" evidence="1">
    <location>
        <begin position="79"/>
        <end position="179"/>
    </location>
</feature>
<feature type="zinc finger region" description="C4-type" evidence="1">
    <location>
        <begin position="56"/>
        <end position="71"/>
    </location>
</feature>
<evidence type="ECO:0000255" key="1">
    <source>
        <dbReference type="HAMAP-Rule" id="MF_00017"/>
    </source>
</evidence>
<organism>
    <name type="scientific">Mycobacterium bovis (strain ATCC BAA-935 / AF2122/97)</name>
    <dbReference type="NCBI Taxonomy" id="233413"/>
    <lineage>
        <taxon>Bacteria</taxon>
        <taxon>Bacillati</taxon>
        <taxon>Actinomycetota</taxon>
        <taxon>Actinomycetes</taxon>
        <taxon>Mycobacteriales</taxon>
        <taxon>Mycobacteriaceae</taxon>
        <taxon>Mycobacterium</taxon>
        <taxon>Mycobacterium tuberculosis complex</taxon>
    </lineage>
</organism>
<dbReference type="EMBL" id="LT708304">
    <property type="protein sequence ID" value="SIU02371.1"/>
    <property type="molecule type" value="Genomic_DNA"/>
</dbReference>
<dbReference type="RefSeq" id="NP_857380.1">
    <property type="nucleotide sequence ID" value="NC_002945.3"/>
</dbReference>
<dbReference type="RefSeq" id="WP_003420407.1">
    <property type="nucleotide sequence ID" value="NC_002945.4"/>
</dbReference>
<dbReference type="SMR" id="P65991"/>
<dbReference type="GeneID" id="45427714"/>
<dbReference type="KEGG" id="mbo:BQ2027_MB3742C"/>
<dbReference type="PATRIC" id="fig|233413.5.peg.4095"/>
<dbReference type="Proteomes" id="UP000001419">
    <property type="component" value="Chromosome"/>
</dbReference>
<dbReference type="GO" id="GO:0003677">
    <property type="term" value="F:DNA binding"/>
    <property type="evidence" value="ECO:0007669"/>
    <property type="project" value="UniProtKB-UniRule"/>
</dbReference>
<dbReference type="GO" id="GO:0008270">
    <property type="term" value="F:zinc ion binding"/>
    <property type="evidence" value="ECO:0007669"/>
    <property type="project" value="UniProtKB-KW"/>
</dbReference>
<dbReference type="GO" id="GO:0006310">
    <property type="term" value="P:DNA recombination"/>
    <property type="evidence" value="ECO:0007669"/>
    <property type="project" value="UniProtKB-UniRule"/>
</dbReference>
<dbReference type="GO" id="GO:0006281">
    <property type="term" value="P:DNA repair"/>
    <property type="evidence" value="ECO:0007669"/>
    <property type="project" value="UniProtKB-UniRule"/>
</dbReference>
<dbReference type="CDD" id="cd01025">
    <property type="entry name" value="TOPRIM_recR"/>
    <property type="match status" value="1"/>
</dbReference>
<dbReference type="Gene3D" id="3.30.60.80">
    <property type="match status" value="1"/>
</dbReference>
<dbReference type="Gene3D" id="3.40.1360.10">
    <property type="match status" value="1"/>
</dbReference>
<dbReference type="Gene3D" id="6.10.250.240">
    <property type="match status" value="1"/>
</dbReference>
<dbReference type="Gene3D" id="1.10.8.420">
    <property type="entry name" value="RecR Domain 1"/>
    <property type="match status" value="1"/>
</dbReference>
<dbReference type="HAMAP" id="MF_00017">
    <property type="entry name" value="RecR"/>
    <property type="match status" value="1"/>
</dbReference>
<dbReference type="InterPro" id="IPR000093">
    <property type="entry name" value="DNA_Rcmb_RecR"/>
</dbReference>
<dbReference type="InterPro" id="IPR003583">
    <property type="entry name" value="Hlx-hairpin-Hlx_DNA-bd_motif"/>
</dbReference>
<dbReference type="InterPro" id="IPR023627">
    <property type="entry name" value="Rcmb_RecR"/>
</dbReference>
<dbReference type="InterPro" id="IPR015967">
    <property type="entry name" value="Rcmb_RecR_Znf"/>
</dbReference>
<dbReference type="InterPro" id="IPR006171">
    <property type="entry name" value="TOPRIM_dom"/>
</dbReference>
<dbReference type="InterPro" id="IPR034137">
    <property type="entry name" value="TOPRIM_RecR"/>
</dbReference>
<dbReference type="NCBIfam" id="TIGR00615">
    <property type="entry name" value="recR"/>
    <property type="match status" value="1"/>
</dbReference>
<dbReference type="PANTHER" id="PTHR30446">
    <property type="entry name" value="RECOMBINATION PROTEIN RECR"/>
    <property type="match status" value="1"/>
</dbReference>
<dbReference type="PANTHER" id="PTHR30446:SF0">
    <property type="entry name" value="RECOMBINATION PROTEIN RECR"/>
    <property type="match status" value="1"/>
</dbReference>
<dbReference type="Pfam" id="PF21175">
    <property type="entry name" value="RecR_C"/>
    <property type="match status" value="1"/>
</dbReference>
<dbReference type="Pfam" id="PF21176">
    <property type="entry name" value="RecR_HhH"/>
    <property type="match status" value="1"/>
</dbReference>
<dbReference type="Pfam" id="PF02132">
    <property type="entry name" value="RecR_ZnF"/>
    <property type="match status" value="1"/>
</dbReference>
<dbReference type="Pfam" id="PF13662">
    <property type="entry name" value="Toprim_4"/>
    <property type="match status" value="1"/>
</dbReference>
<dbReference type="SMART" id="SM00278">
    <property type="entry name" value="HhH1"/>
    <property type="match status" value="1"/>
</dbReference>
<dbReference type="SMART" id="SM00493">
    <property type="entry name" value="TOPRIM"/>
    <property type="match status" value="1"/>
</dbReference>
<dbReference type="SUPFAM" id="SSF111304">
    <property type="entry name" value="Recombination protein RecR"/>
    <property type="match status" value="1"/>
</dbReference>
<dbReference type="PROSITE" id="PS01300">
    <property type="entry name" value="RECR"/>
    <property type="match status" value="1"/>
</dbReference>
<dbReference type="PROSITE" id="PS50880">
    <property type="entry name" value="TOPRIM"/>
    <property type="match status" value="1"/>
</dbReference>
<keyword id="KW-0227">DNA damage</keyword>
<keyword id="KW-0233">DNA recombination</keyword>
<keyword id="KW-0234">DNA repair</keyword>
<keyword id="KW-0479">Metal-binding</keyword>
<keyword id="KW-1185">Reference proteome</keyword>
<keyword id="KW-0862">Zinc</keyword>
<keyword id="KW-0863">Zinc-finger</keyword>
<gene>
    <name evidence="1" type="primary">recR</name>
    <name type="ordered locus">BQ2027_MB3742C</name>
</gene>
<protein>
    <recommendedName>
        <fullName evidence="1">Recombination protein RecR</fullName>
    </recommendedName>
</protein>
<accession>P65991</accession>
<accession>A0A1R3Y511</accession>
<accession>O69682</accession>
<accession>X2BP52</accession>
<comment type="function">
    <text evidence="1">May play a role in DNA repair. It seems to be involved in an RecBC-independent recombinational process of DNA repair. It may act with RecF and RecO.</text>
</comment>
<comment type="similarity">
    <text evidence="1">Belongs to the RecR family.</text>
</comment>
<name>RECR_MYCBO</name>
<sequence length="203" mass="22119">MFEGPVQDLIDELGKLPGIGPKSAQRIAFHLLSVEPSDIDRLTGVLAKVRDGVRFCAVCGNVSDNERCRICSDIRRDASVVCIVEEPKDIQAVERTREFRGRYHVLGGALDPLSGIGPDQLRIRELLSRIGERVDDVDVTEVIIATDPNTEGEATATYLVRMLRDIPGLTVTRIASGLPMGGDLEFADELTLGRALAGRRVLA</sequence>